<evidence type="ECO:0000255" key="1">
    <source>
        <dbReference type="HAMAP-Rule" id="MF_01322"/>
    </source>
</evidence>
<evidence type="ECO:0000256" key="2">
    <source>
        <dbReference type="SAM" id="MobiDB-lite"/>
    </source>
</evidence>
<accession>A6TWI9</accession>
<keyword id="KW-0240">DNA-directed RNA polymerase</keyword>
<keyword id="KW-0460">Magnesium</keyword>
<keyword id="KW-0479">Metal-binding</keyword>
<keyword id="KW-0548">Nucleotidyltransferase</keyword>
<keyword id="KW-1185">Reference proteome</keyword>
<keyword id="KW-0804">Transcription</keyword>
<keyword id="KW-0808">Transferase</keyword>
<keyword id="KW-0862">Zinc</keyword>
<name>RPOC_ALKMQ</name>
<protein>
    <recommendedName>
        <fullName evidence="1">DNA-directed RNA polymerase subunit beta'</fullName>
        <shortName evidence="1">RNAP subunit beta'</shortName>
        <ecNumber evidence="1">2.7.7.6</ecNumber>
    </recommendedName>
    <alternativeName>
        <fullName evidence="1">RNA polymerase subunit beta'</fullName>
    </alternativeName>
    <alternativeName>
        <fullName evidence="1">Transcriptase subunit beta'</fullName>
    </alternativeName>
</protein>
<organism>
    <name type="scientific">Alkaliphilus metalliredigens (strain QYMF)</name>
    <dbReference type="NCBI Taxonomy" id="293826"/>
    <lineage>
        <taxon>Bacteria</taxon>
        <taxon>Bacillati</taxon>
        <taxon>Bacillota</taxon>
        <taxon>Clostridia</taxon>
        <taxon>Peptostreptococcales</taxon>
        <taxon>Natronincolaceae</taxon>
        <taxon>Alkaliphilus</taxon>
    </lineage>
</organism>
<sequence>MYELNNFRSIKIALASPEKIRQWSKGEVKKPETINYRTLKPEKEGLFCEKIFGPTRDWECHCGKYKRVRYKGVVCDRCGVEVTKSKVRRERMGHIELAAPVSHIWYFKGIPSRMGLLLDMSPRSLEKVLYFAAYIVINPGETPLTEKQILTEKEYADAIEKYGPKFKAGMGAEAVKGLLESIDLDAMNIELRHKLKESTGQKRIRTVRRLEVVEAFRKSKNNPAWMILDVVPVIPPDLRPMVQLDGGRFATSDLNDLYRRVINRNNRLKRLLDLGAPDIIVRNEKRMLQEAVDALIDNGRRGKPVTGPGNRPLKSLSDMLKGKQGRFRQNLLGKRVDYSGRSVIVVGPELKFYQCGLPKQMALELFKPFVMKKLVQENYAHNIKSAKRMVEKVKPEVWGVLEEVISQHPVLLNRAPTLHRLGIQAFEPILVEGKAIKLHPLVCTAYNADFDGDQMAVHVPLSVEAQAESRFLMLSINNILAPKDGEPITTPTQDMVLGCYYLTIQDEGVLGEGTIFKDFEELLLAYETKAVSLHAKVKVRMKLSAEDSGKLVESTVGRFIFNEKIPQDLGFVDRSKDLYALEVDFLCTKGALGKVIGKCFRKHGNTITSIMLDYIKELGFKYSTRGAITVAVSDMDVPEAKAELISQAEQRVDKYEKAFRRGLISDEERYEKVIETWTETTEKVTDALMAGLDRFNNIFIMADSGARGSKNQIRQLGGMRGLMANASGHTVEIPIKSNFREGLTVLEYFTSTHGARKGLADTALRTADSGYLTRRLVDVSQDVIIRELDCGTETGIVAKAFKDGNEVIEELYFRIVGRHSIDDIIHPETKKVIVPKGDIIFEDAAETITEAGIEKVAIRSALACRSKHGVCGTCYGRNLATGEPVKVGEAVGIIAAQSIGEPGTQLTMRTFHTGGVAGSDITQGLPRVEELFEARKPKGLAIISEISGKVDISESKRKREVTVTDENQEVVTYTIPYGSRVKVKQGQILEPGDEITEGSVNPHDILRIKGVEGVQTYIIKEVQRVYRLQGVDINDKHIEVISRQMLSRIKVEEAGDTELLPGSLENVFAFELANQKAIEEGGEPATGNIALLGITKASLATDSFLSAASFQETTRVLTEAAIKGKEDHLIGLKENVIIGKLIPAGTGMKRYKNIAISTETDEKLDEIEETL</sequence>
<dbReference type="EC" id="2.7.7.6" evidence="1"/>
<dbReference type="EMBL" id="CP000724">
    <property type="protein sequence ID" value="ABR50557.1"/>
    <property type="molecule type" value="Genomic_DNA"/>
</dbReference>
<dbReference type="RefSeq" id="WP_012065448.1">
    <property type="nucleotide sequence ID" value="NC_009633.1"/>
</dbReference>
<dbReference type="SMR" id="A6TWI9"/>
<dbReference type="STRING" id="293826.Amet_4485"/>
<dbReference type="KEGG" id="amt:Amet_4485"/>
<dbReference type="eggNOG" id="COG0086">
    <property type="taxonomic scope" value="Bacteria"/>
</dbReference>
<dbReference type="HOGENOM" id="CLU_000524_3_1_9"/>
<dbReference type="OrthoDB" id="9815296at2"/>
<dbReference type="Proteomes" id="UP000001572">
    <property type="component" value="Chromosome"/>
</dbReference>
<dbReference type="GO" id="GO:0000428">
    <property type="term" value="C:DNA-directed RNA polymerase complex"/>
    <property type="evidence" value="ECO:0007669"/>
    <property type="project" value="UniProtKB-KW"/>
</dbReference>
<dbReference type="GO" id="GO:0003677">
    <property type="term" value="F:DNA binding"/>
    <property type="evidence" value="ECO:0007669"/>
    <property type="project" value="UniProtKB-UniRule"/>
</dbReference>
<dbReference type="GO" id="GO:0003899">
    <property type="term" value="F:DNA-directed RNA polymerase activity"/>
    <property type="evidence" value="ECO:0007669"/>
    <property type="project" value="UniProtKB-UniRule"/>
</dbReference>
<dbReference type="GO" id="GO:0000287">
    <property type="term" value="F:magnesium ion binding"/>
    <property type="evidence" value="ECO:0007669"/>
    <property type="project" value="UniProtKB-UniRule"/>
</dbReference>
<dbReference type="GO" id="GO:0008270">
    <property type="term" value="F:zinc ion binding"/>
    <property type="evidence" value="ECO:0007669"/>
    <property type="project" value="UniProtKB-UniRule"/>
</dbReference>
<dbReference type="GO" id="GO:0006351">
    <property type="term" value="P:DNA-templated transcription"/>
    <property type="evidence" value="ECO:0007669"/>
    <property type="project" value="UniProtKB-UniRule"/>
</dbReference>
<dbReference type="CDD" id="cd02655">
    <property type="entry name" value="RNAP_beta'_C"/>
    <property type="match status" value="1"/>
</dbReference>
<dbReference type="CDD" id="cd01609">
    <property type="entry name" value="RNAP_beta'_N"/>
    <property type="match status" value="1"/>
</dbReference>
<dbReference type="FunFam" id="1.10.150.390:FF:000002">
    <property type="entry name" value="DNA-directed RNA polymerase subunit beta"/>
    <property type="match status" value="1"/>
</dbReference>
<dbReference type="FunFam" id="4.10.860.120:FF:000001">
    <property type="entry name" value="DNA-directed RNA polymerase subunit beta"/>
    <property type="match status" value="1"/>
</dbReference>
<dbReference type="Gene3D" id="1.10.132.30">
    <property type="match status" value="1"/>
</dbReference>
<dbReference type="Gene3D" id="1.10.150.390">
    <property type="match status" value="1"/>
</dbReference>
<dbReference type="Gene3D" id="1.10.1790.20">
    <property type="match status" value="1"/>
</dbReference>
<dbReference type="Gene3D" id="1.10.40.90">
    <property type="match status" value="1"/>
</dbReference>
<dbReference type="Gene3D" id="2.40.40.20">
    <property type="match status" value="1"/>
</dbReference>
<dbReference type="Gene3D" id="2.40.50.100">
    <property type="match status" value="1"/>
</dbReference>
<dbReference type="Gene3D" id="4.10.860.120">
    <property type="entry name" value="RNA polymerase II, clamp domain"/>
    <property type="match status" value="1"/>
</dbReference>
<dbReference type="Gene3D" id="1.10.274.100">
    <property type="entry name" value="RNA polymerase Rpb1, domain 3"/>
    <property type="match status" value="2"/>
</dbReference>
<dbReference type="HAMAP" id="MF_01322">
    <property type="entry name" value="RNApol_bact_RpoC"/>
    <property type="match status" value="1"/>
</dbReference>
<dbReference type="InterPro" id="IPR045867">
    <property type="entry name" value="DNA-dir_RpoC_beta_prime"/>
</dbReference>
<dbReference type="InterPro" id="IPR012754">
    <property type="entry name" value="DNA-dir_RpoC_beta_prime_bact"/>
</dbReference>
<dbReference type="InterPro" id="IPR000722">
    <property type="entry name" value="RNA_pol_asu"/>
</dbReference>
<dbReference type="InterPro" id="IPR006592">
    <property type="entry name" value="RNA_pol_N"/>
</dbReference>
<dbReference type="InterPro" id="IPR007080">
    <property type="entry name" value="RNA_pol_Rpb1_1"/>
</dbReference>
<dbReference type="InterPro" id="IPR007066">
    <property type="entry name" value="RNA_pol_Rpb1_3"/>
</dbReference>
<dbReference type="InterPro" id="IPR042102">
    <property type="entry name" value="RNA_pol_Rpb1_3_sf"/>
</dbReference>
<dbReference type="InterPro" id="IPR007083">
    <property type="entry name" value="RNA_pol_Rpb1_4"/>
</dbReference>
<dbReference type="InterPro" id="IPR007081">
    <property type="entry name" value="RNA_pol_Rpb1_5"/>
</dbReference>
<dbReference type="InterPro" id="IPR044893">
    <property type="entry name" value="RNA_pol_Rpb1_clamp_domain"/>
</dbReference>
<dbReference type="InterPro" id="IPR038120">
    <property type="entry name" value="Rpb1_funnel_sf"/>
</dbReference>
<dbReference type="NCBIfam" id="TIGR02386">
    <property type="entry name" value="rpoC_TIGR"/>
    <property type="match status" value="1"/>
</dbReference>
<dbReference type="PANTHER" id="PTHR19376">
    <property type="entry name" value="DNA-DIRECTED RNA POLYMERASE"/>
    <property type="match status" value="1"/>
</dbReference>
<dbReference type="PANTHER" id="PTHR19376:SF54">
    <property type="entry name" value="DNA-DIRECTED RNA POLYMERASE SUBUNIT BETA"/>
    <property type="match status" value="1"/>
</dbReference>
<dbReference type="Pfam" id="PF04997">
    <property type="entry name" value="RNA_pol_Rpb1_1"/>
    <property type="match status" value="1"/>
</dbReference>
<dbReference type="Pfam" id="PF00623">
    <property type="entry name" value="RNA_pol_Rpb1_2"/>
    <property type="match status" value="2"/>
</dbReference>
<dbReference type="Pfam" id="PF04983">
    <property type="entry name" value="RNA_pol_Rpb1_3"/>
    <property type="match status" value="1"/>
</dbReference>
<dbReference type="Pfam" id="PF05000">
    <property type="entry name" value="RNA_pol_Rpb1_4"/>
    <property type="match status" value="1"/>
</dbReference>
<dbReference type="Pfam" id="PF04998">
    <property type="entry name" value="RNA_pol_Rpb1_5"/>
    <property type="match status" value="2"/>
</dbReference>
<dbReference type="SMART" id="SM00663">
    <property type="entry name" value="RPOLA_N"/>
    <property type="match status" value="1"/>
</dbReference>
<dbReference type="SUPFAM" id="SSF64484">
    <property type="entry name" value="beta and beta-prime subunits of DNA dependent RNA-polymerase"/>
    <property type="match status" value="1"/>
</dbReference>
<comment type="function">
    <text evidence="1">DNA-dependent RNA polymerase catalyzes the transcription of DNA into RNA using the four ribonucleoside triphosphates as substrates.</text>
</comment>
<comment type="catalytic activity">
    <reaction evidence="1">
        <text>RNA(n) + a ribonucleoside 5'-triphosphate = RNA(n+1) + diphosphate</text>
        <dbReference type="Rhea" id="RHEA:21248"/>
        <dbReference type="Rhea" id="RHEA-COMP:14527"/>
        <dbReference type="Rhea" id="RHEA-COMP:17342"/>
        <dbReference type="ChEBI" id="CHEBI:33019"/>
        <dbReference type="ChEBI" id="CHEBI:61557"/>
        <dbReference type="ChEBI" id="CHEBI:140395"/>
        <dbReference type="EC" id="2.7.7.6"/>
    </reaction>
</comment>
<comment type="cofactor">
    <cofactor evidence="1">
        <name>Mg(2+)</name>
        <dbReference type="ChEBI" id="CHEBI:18420"/>
    </cofactor>
    <text evidence="1">Binds 1 Mg(2+) ion per subunit.</text>
</comment>
<comment type="cofactor">
    <cofactor evidence="1">
        <name>Zn(2+)</name>
        <dbReference type="ChEBI" id="CHEBI:29105"/>
    </cofactor>
    <text evidence="1">Binds 2 Zn(2+) ions per subunit.</text>
</comment>
<comment type="subunit">
    <text evidence="1">The RNAP catalytic core consists of 2 alpha, 1 beta, 1 beta' and 1 omega subunit. When a sigma factor is associated with the core the holoenzyme is formed, which can initiate transcription.</text>
</comment>
<comment type="similarity">
    <text evidence="1">Belongs to the RNA polymerase beta' chain family.</text>
</comment>
<feature type="chain" id="PRO_0000353284" description="DNA-directed RNA polymerase subunit beta'">
    <location>
        <begin position="1"/>
        <end position="1171"/>
    </location>
</feature>
<feature type="region of interest" description="Disordered" evidence="2">
    <location>
        <begin position="299"/>
        <end position="319"/>
    </location>
</feature>
<feature type="binding site" evidence="1">
    <location>
        <position position="60"/>
    </location>
    <ligand>
        <name>Zn(2+)</name>
        <dbReference type="ChEBI" id="CHEBI:29105"/>
        <label>1</label>
    </ligand>
</feature>
<feature type="binding site" evidence="1">
    <location>
        <position position="62"/>
    </location>
    <ligand>
        <name>Zn(2+)</name>
        <dbReference type="ChEBI" id="CHEBI:29105"/>
        <label>1</label>
    </ligand>
</feature>
<feature type="binding site" evidence="1">
    <location>
        <position position="75"/>
    </location>
    <ligand>
        <name>Zn(2+)</name>
        <dbReference type="ChEBI" id="CHEBI:29105"/>
        <label>1</label>
    </ligand>
</feature>
<feature type="binding site" evidence="1">
    <location>
        <position position="78"/>
    </location>
    <ligand>
        <name>Zn(2+)</name>
        <dbReference type="ChEBI" id="CHEBI:29105"/>
        <label>1</label>
    </ligand>
</feature>
<feature type="binding site" evidence="1">
    <location>
        <position position="449"/>
    </location>
    <ligand>
        <name>Mg(2+)</name>
        <dbReference type="ChEBI" id="CHEBI:18420"/>
    </ligand>
</feature>
<feature type="binding site" evidence="1">
    <location>
        <position position="451"/>
    </location>
    <ligand>
        <name>Mg(2+)</name>
        <dbReference type="ChEBI" id="CHEBI:18420"/>
    </ligand>
</feature>
<feature type="binding site" evidence="1">
    <location>
        <position position="453"/>
    </location>
    <ligand>
        <name>Mg(2+)</name>
        <dbReference type="ChEBI" id="CHEBI:18420"/>
    </ligand>
</feature>
<feature type="binding site" evidence="1">
    <location>
        <position position="790"/>
    </location>
    <ligand>
        <name>Zn(2+)</name>
        <dbReference type="ChEBI" id="CHEBI:29105"/>
        <label>2</label>
    </ligand>
</feature>
<feature type="binding site" evidence="1">
    <location>
        <position position="864"/>
    </location>
    <ligand>
        <name>Zn(2+)</name>
        <dbReference type="ChEBI" id="CHEBI:29105"/>
        <label>2</label>
    </ligand>
</feature>
<feature type="binding site" evidence="1">
    <location>
        <position position="871"/>
    </location>
    <ligand>
        <name>Zn(2+)</name>
        <dbReference type="ChEBI" id="CHEBI:29105"/>
        <label>2</label>
    </ligand>
</feature>
<feature type="binding site" evidence="1">
    <location>
        <position position="874"/>
    </location>
    <ligand>
        <name>Zn(2+)</name>
        <dbReference type="ChEBI" id="CHEBI:29105"/>
        <label>2</label>
    </ligand>
</feature>
<reference key="1">
    <citation type="journal article" date="2016" name="Genome Announc.">
        <title>Complete genome sequence of Alkaliphilus metalliredigens strain QYMF, an alkaliphilic and metal-reducing bacterium isolated from borax-contaminated leachate ponds.</title>
        <authorList>
            <person name="Hwang C."/>
            <person name="Copeland A."/>
            <person name="Lucas S."/>
            <person name="Lapidus A."/>
            <person name="Barry K."/>
            <person name="Detter J.C."/>
            <person name="Glavina Del Rio T."/>
            <person name="Hammon N."/>
            <person name="Israni S."/>
            <person name="Dalin E."/>
            <person name="Tice H."/>
            <person name="Pitluck S."/>
            <person name="Chertkov O."/>
            <person name="Brettin T."/>
            <person name="Bruce D."/>
            <person name="Han C."/>
            <person name="Schmutz J."/>
            <person name="Larimer F."/>
            <person name="Land M.L."/>
            <person name="Hauser L."/>
            <person name="Kyrpides N."/>
            <person name="Mikhailova N."/>
            <person name="Ye Q."/>
            <person name="Zhou J."/>
            <person name="Richardson P."/>
            <person name="Fields M.W."/>
        </authorList>
    </citation>
    <scope>NUCLEOTIDE SEQUENCE [LARGE SCALE GENOMIC DNA]</scope>
    <source>
        <strain>QYMF</strain>
    </source>
</reference>
<proteinExistence type="inferred from homology"/>
<gene>
    <name evidence="1" type="primary">rpoC</name>
    <name type="ordered locus">Amet_4485</name>
</gene>